<accession>Q9SB58</accession>
<accession>Q0WWZ7</accession>
<reference key="1">
    <citation type="journal article" date="1999" name="Nature">
        <title>Sequence and analysis of chromosome 4 of the plant Arabidopsis thaliana.</title>
        <authorList>
            <person name="Mayer K.F.X."/>
            <person name="Schueller C."/>
            <person name="Wambutt R."/>
            <person name="Murphy G."/>
            <person name="Volckaert G."/>
            <person name="Pohl T."/>
            <person name="Duesterhoeft A."/>
            <person name="Stiekema W."/>
            <person name="Entian K.-D."/>
            <person name="Terryn N."/>
            <person name="Harris B."/>
            <person name="Ansorge W."/>
            <person name="Brandt P."/>
            <person name="Grivell L.A."/>
            <person name="Rieger M."/>
            <person name="Weichselgartner M."/>
            <person name="de Simone V."/>
            <person name="Obermaier B."/>
            <person name="Mache R."/>
            <person name="Mueller M."/>
            <person name="Kreis M."/>
            <person name="Delseny M."/>
            <person name="Puigdomenech P."/>
            <person name="Watson M."/>
            <person name="Schmidtheini T."/>
            <person name="Reichert B."/>
            <person name="Portetelle D."/>
            <person name="Perez-Alonso M."/>
            <person name="Boutry M."/>
            <person name="Bancroft I."/>
            <person name="Vos P."/>
            <person name="Hoheisel J."/>
            <person name="Zimmermann W."/>
            <person name="Wedler H."/>
            <person name="Ridley P."/>
            <person name="Langham S.-A."/>
            <person name="McCullagh B."/>
            <person name="Bilham L."/>
            <person name="Robben J."/>
            <person name="van der Schueren J."/>
            <person name="Grymonprez B."/>
            <person name="Chuang Y.-J."/>
            <person name="Vandenbussche F."/>
            <person name="Braeken M."/>
            <person name="Weltjens I."/>
            <person name="Voet M."/>
            <person name="Bastiaens I."/>
            <person name="Aert R."/>
            <person name="Defoor E."/>
            <person name="Weitzenegger T."/>
            <person name="Bothe G."/>
            <person name="Ramsperger U."/>
            <person name="Hilbert H."/>
            <person name="Braun M."/>
            <person name="Holzer E."/>
            <person name="Brandt A."/>
            <person name="Peters S."/>
            <person name="van Staveren M."/>
            <person name="Dirkse W."/>
            <person name="Mooijman P."/>
            <person name="Klein Lankhorst R."/>
            <person name="Rose M."/>
            <person name="Hauf J."/>
            <person name="Koetter P."/>
            <person name="Berneiser S."/>
            <person name="Hempel S."/>
            <person name="Feldpausch M."/>
            <person name="Lamberth S."/>
            <person name="Van den Daele H."/>
            <person name="De Keyser A."/>
            <person name="Buysshaert C."/>
            <person name="Gielen J."/>
            <person name="Villarroel R."/>
            <person name="De Clercq R."/>
            <person name="van Montagu M."/>
            <person name="Rogers J."/>
            <person name="Cronin A."/>
            <person name="Quail M.A."/>
            <person name="Bray-Allen S."/>
            <person name="Clark L."/>
            <person name="Doggett J."/>
            <person name="Hall S."/>
            <person name="Kay M."/>
            <person name="Lennard N."/>
            <person name="McLay K."/>
            <person name="Mayes R."/>
            <person name="Pettett A."/>
            <person name="Rajandream M.A."/>
            <person name="Lyne M."/>
            <person name="Benes V."/>
            <person name="Rechmann S."/>
            <person name="Borkova D."/>
            <person name="Bloecker H."/>
            <person name="Scharfe M."/>
            <person name="Grimm M."/>
            <person name="Loehnert T.-H."/>
            <person name="Dose S."/>
            <person name="de Haan M."/>
            <person name="Maarse A.C."/>
            <person name="Schaefer M."/>
            <person name="Mueller-Auer S."/>
            <person name="Gabel C."/>
            <person name="Fuchs M."/>
            <person name="Fartmann B."/>
            <person name="Granderath K."/>
            <person name="Dauner D."/>
            <person name="Herzl A."/>
            <person name="Neumann S."/>
            <person name="Argiriou A."/>
            <person name="Vitale D."/>
            <person name="Liguori R."/>
            <person name="Piravandi E."/>
            <person name="Massenet O."/>
            <person name="Quigley F."/>
            <person name="Clabauld G."/>
            <person name="Muendlein A."/>
            <person name="Felber R."/>
            <person name="Schnabl S."/>
            <person name="Hiller R."/>
            <person name="Schmidt W."/>
            <person name="Lecharny A."/>
            <person name="Aubourg S."/>
            <person name="Chefdor F."/>
            <person name="Cooke R."/>
            <person name="Berger C."/>
            <person name="Monfort A."/>
            <person name="Casacuberta E."/>
            <person name="Gibbons T."/>
            <person name="Weber N."/>
            <person name="Vandenbol M."/>
            <person name="Bargues M."/>
            <person name="Terol J."/>
            <person name="Torres A."/>
            <person name="Perez-Perez A."/>
            <person name="Purnelle B."/>
            <person name="Bent E."/>
            <person name="Johnson S."/>
            <person name="Tacon D."/>
            <person name="Jesse T."/>
            <person name="Heijnen L."/>
            <person name="Schwarz S."/>
            <person name="Scholler P."/>
            <person name="Heber S."/>
            <person name="Francs P."/>
            <person name="Bielke C."/>
            <person name="Frishman D."/>
            <person name="Haase D."/>
            <person name="Lemcke K."/>
            <person name="Mewes H.-W."/>
            <person name="Stocker S."/>
            <person name="Zaccaria P."/>
            <person name="Bevan M."/>
            <person name="Wilson R.K."/>
            <person name="de la Bastide M."/>
            <person name="Habermann K."/>
            <person name="Parnell L."/>
            <person name="Dedhia N."/>
            <person name="Gnoj L."/>
            <person name="Schutz K."/>
            <person name="Huang E."/>
            <person name="Spiegel L."/>
            <person name="Sekhon M."/>
            <person name="Murray J."/>
            <person name="Sheet P."/>
            <person name="Cordes M."/>
            <person name="Abu-Threideh J."/>
            <person name="Stoneking T."/>
            <person name="Kalicki J."/>
            <person name="Graves T."/>
            <person name="Harmon G."/>
            <person name="Edwards J."/>
            <person name="Latreille P."/>
            <person name="Courtney L."/>
            <person name="Cloud J."/>
            <person name="Abbott A."/>
            <person name="Scott K."/>
            <person name="Johnson D."/>
            <person name="Minx P."/>
            <person name="Bentley D."/>
            <person name="Fulton B."/>
            <person name="Miller N."/>
            <person name="Greco T."/>
            <person name="Kemp K."/>
            <person name="Kramer J."/>
            <person name="Fulton L."/>
            <person name="Mardis E."/>
            <person name="Dante M."/>
            <person name="Pepin K."/>
            <person name="Hillier L.W."/>
            <person name="Nelson J."/>
            <person name="Spieth J."/>
            <person name="Ryan E."/>
            <person name="Andrews S."/>
            <person name="Geisel C."/>
            <person name="Layman D."/>
            <person name="Du H."/>
            <person name="Ali J."/>
            <person name="Berghoff A."/>
            <person name="Jones K."/>
            <person name="Drone K."/>
            <person name="Cotton M."/>
            <person name="Joshu C."/>
            <person name="Antonoiu B."/>
            <person name="Zidanic M."/>
            <person name="Strong C."/>
            <person name="Sun H."/>
            <person name="Lamar B."/>
            <person name="Yordan C."/>
            <person name="Ma P."/>
            <person name="Zhong J."/>
            <person name="Preston R."/>
            <person name="Vil D."/>
            <person name="Shekher M."/>
            <person name="Matero A."/>
            <person name="Shah R."/>
            <person name="Swaby I.K."/>
            <person name="O'Shaughnessy A."/>
            <person name="Rodriguez M."/>
            <person name="Hoffman J."/>
            <person name="Till S."/>
            <person name="Granat S."/>
            <person name="Shohdy N."/>
            <person name="Hasegawa A."/>
            <person name="Hameed A."/>
            <person name="Lodhi M."/>
            <person name="Johnson A."/>
            <person name="Chen E."/>
            <person name="Marra M.A."/>
            <person name="Martienssen R."/>
            <person name="McCombie W.R."/>
        </authorList>
    </citation>
    <scope>NUCLEOTIDE SEQUENCE [LARGE SCALE GENOMIC DNA]</scope>
    <source>
        <strain>cv. Columbia</strain>
    </source>
</reference>
<reference key="2">
    <citation type="journal article" date="2017" name="Plant J.">
        <title>Araport11: a complete reannotation of the Arabidopsis thaliana reference genome.</title>
        <authorList>
            <person name="Cheng C.Y."/>
            <person name="Krishnakumar V."/>
            <person name="Chan A.P."/>
            <person name="Thibaud-Nissen F."/>
            <person name="Schobel S."/>
            <person name="Town C.D."/>
        </authorList>
    </citation>
    <scope>GENOME REANNOTATION</scope>
    <source>
        <strain>cv. Columbia</strain>
    </source>
</reference>
<reference key="3">
    <citation type="submission" date="2006-07" db="EMBL/GenBank/DDBJ databases">
        <title>Large-scale analysis of RIKEN Arabidopsis full-length (RAFL) cDNAs.</title>
        <authorList>
            <person name="Totoki Y."/>
            <person name="Seki M."/>
            <person name="Ishida J."/>
            <person name="Nakajima M."/>
            <person name="Enju A."/>
            <person name="Kamiya A."/>
            <person name="Narusaka M."/>
            <person name="Shin-i T."/>
            <person name="Nakagawa M."/>
            <person name="Sakamoto N."/>
            <person name="Oishi K."/>
            <person name="Kohara Y."/>
            <person name="Kobayashi M."/>
            <person name="Toyoda A."/>
            <person name="Sakaki Y."/>
            <person name="Sakurai T."/>
            <person name="Iida K."/>
            <person name="Akiyama K."/>
            <person name="Satou M."/>
            <person name="Toyoda T."/>
            <person name="Konagaya A."/>
            <person name="Carninci P."/>
            <person name="Kawai J."/>
            <person name="Hayashizaki Y."/>
            <person name="Shinozaki K."/>
        </authorList>
    </citation>
    <scope>NUCLEOTIDE SEQUENCE [LARGE SCALE MRNA] OF 1-298</scope>
    <source>
        <strain>cv. Columbia</strain>
    </source>
</reference>
<reference key="4">
    <citation type="journal article" date="2003" name="Mol. Cell. Proteomics">
        <title>Large-scale analysis of in vivo phosphorylated membrane proteins by immobilized metal ion affinity chromatography and mass spectrometry.</title>
        <authorList>
            <person name="Nuehse T.S."/>
            <person name="Stensballe A."/>
            <person name="Jensen O.N."/>
            <person name="Peck S.C."/>
        </authorList>
    </citation>
    <scope>IDENTIFICATION BY MASS SPECTROMETRY [LARGE SCALE ANALYSIS]</scope>
    <source>
        <strain>cv. La-0</strain>
    </source>
</reference>
<reference key="5">
    <citation type="journal article" date="2004" name="Plant Cell">
        <title>Phosphoproteomics of the Arabidopsis plasma membrane and a new phosphorylation site database.</title>
        <authorList>
            <person name="Nuehse T.S."/>
            <person name="Stensballe A."/>
            <person name="Jensen O.N."/>
            <person name="Peck S.C."/>
        </authorList>
    </citation>
    <scope>IDENTIFICATION BY MASS SPECTROMETRY [LARGE SCALE ANALYSIS]</scope>
</reference>
<reference key="6">
    <citation type="book" date="2007" name="Proceedings of the 18th international conference on Arabidopsis research">
        <title>S-acylation: dynamic control of plant development and sigalling by lipid modification of proteins.</title>
        <authorList>
            <person name="Hemsley P.A."/>
            <person name="Taylor L."/>
            <person name="Grierson C.S."/>
        </authorList>
    </citation>
    <scope>GENE FAMILY</scope>
    <scope>FUNCTION</scope>
</reference>
<reference key="7">
    <citation type="journal article" date="2012" name="Plant Physiol.">
        <title>Genomics and localization of the Arabidopsis DHHC-cysteine-rich domain S-acyltransferase protein family.</title>
        <authorList>
            <person name="Batistic O."/>
        </authorList>
    </citation>
    <scope>FUNCTION</scope>
    <scope>SUBCELLULAR LOCATION</scope>
    <scope>TISSUE SPECIFICITY</scope>
    <scope>GENE FAMILY</scope>
    <scope>NOMENCLATURE</scope>
</reference>
<gene>
    <name type="primary">PAT08</name>
    <name type="ordered locus">At4g24630</name>
    <name type="ORF">F22K18.170</name>
</gene>
<sequence length="407" mass="46747">MTQRVFQVWKGSNKFILGGRLIFGPDARSLPLTLLLIIVPVVLFCVFVARHLRHEFSPYNAGYAIMVVAILFTIYVLILLFFTSARDPGIVPRNSHPPEEDLRYETTVSADGRQTPSVQIPRTKEVIVNGVSVRVKYCDTCMLYRPPRCSHCSICNNCVERFDHHCPWVGQCIGLRNYRYFFMFVSSSTLLCIYIFSMSAVYIKILMDHQQATVWRAMKESPWAVVLMIYCFIALWFVGGLTAFHLYLISTNQTTYEKLRYRSSHSRSIVYNRGCPNNFLEVFCSKVKPSRNNFRAFIEEEPPRVITLPSTTRESGEAEDENVTRRQKVEDDLDIGDDLMNLSRRCNAEDANNNQPHHTLDIDHERAGSIRTEARHESWGRRSGSWDVAATDVRESRSYATAKDGRG</sequence>
<proteinExistence type="evidence at protein level"/>
<dbReference type="EC" id="2.3.1.225"/>
<dbReference type="EMBL" id="AL035356">
    <property type="protein sequence ID" value="CAA23000.1"/>
    <property type="status" value="ALT_SEQ"/>
    <property type="molecule type" value="Genomic_DNA"/>
</dbReference>
<dbReference type="EMBL" id="AL161561">
    <property type="protein sequence ID" value="CAB79373.1"/>
    <property type="status" value="ALT_SEQ"/>
    <property type="molecule type" value="Genomic_DNA"/>
</dbReference>
<dbReference type="EMBL" id="CP002687">
    <property type="protein sequence ID" value="AEE84935.1"/>
    <property type="molecule type" value="Genomic_DNA"/>
</dbReference>
<dbReference type="EMBL" id="AK226186">
    <property type="protein sequence ID" value="BAE98351.1"/>
    <property type="molecule type" value="mRNA"/>
</dbReference>
<dbReference type="PIR" id="T05571">
    <property type="entry name" value="T05571"/>
</dbReference>
<dbReference type="RefSeq" id="NP_194194.2">
    <property type="nucleotide sequence ID" value="NM_118596.3"/>
</dbReference>
<dbReference type="SMR" id="Q9SB58"/>
<dbReference type="FunCoup" id="Q9SB58">
    <property type="interactions" value="2692"/>
</dbReference>
<dbReference type="STRING" id="3702.Q9SB58"/>
<dbReference type="iPTMnet" id="Q9SB58"/>
<dbReference type="SwissPalm" id="Q9SB58"/>
<dbReference type="PaxDb" id="3702-AT4G24630.1"/>
<dbReference type="ProteomicsDB" id="242974"/>
<dbReference type="EnsemblPlants" id="AT4G24630.1">
    <property type="protein sequence ID" value="AT4G24630.1"/>
    <property type="gene ID" value="AT4G24630"/>
</dbReference>
<dbReference type="GeneID" id="828565"/>
<dbReference type="Gramene" id="AT4G24630.1">
    <property type="protein sequence ID" value="AT4G24630.1"/>
    <property type="gene ID" value="AT4G24630"/>
</dbReference>
<dbReference type="KEGG" id="ath:AT4G24630"/>
<dbReference type="Araport" id="AT4G24630"/>
<dbReference type="TAIR" id="AT4G24630"/>
<dbReference type="eggNOG" id="KOG1311">
    <property type="taxonomic scope" value="Eukaryota"/>
</dbReference>
<dbReference type="HOGENOM" id="CLU_018741_2_1_1"/>
<dbReference type="InParanoid" id="Q9SB58"/>
<dbReference type="OMA" id="MDDHHGT"/>
<dbReference type="PhylomeDB" id="Q9SB58"/>
<dbReference type="BRENDA" id="2.3.1.225">
    <property type="organism ID" value="399"/>
</dbReference>
<dbReference type="PRO" id="PR:Q9SB58"/>
<dbReference type="Proteomes" id="UP000006548">
    <property type="component" value="Chromosome 4"/>
</dbReference>
<dbReference type="ExpressionAtlas" id="Q9SB58">
    <property type="expression patterns" value="baseline and differential"/>
</dbReference>
<dbReference type="GO" id="GO:0005886">
    <property type="term" value="C:plasma membrane"/>
    <property type="evidence" value="ECO:0007005"/>
    <property type="project" value="TAIR"/>
</dbReference>
<dbReference type="GO" id="GO:0019706">
    <property type="term" value="F:protein-cysteine S-palmitoyltransferase activity"/>
    <property type="evidence" value="ECO:0007669"/>
    <property type="project" value="UniProtKB-EC"/>
</dbReference>
<dbReference type="InterPro" id="IPR001594">
    <property type="entry name" value="Palmitoyltrfase_DHHC"/>
</dbReference>
<dbReference type="InterPro" id="IPR039859">
    <property type="entry name" value="PFA4/ZDH16/20/ERF2-like"/>
</dbReference>
<dbReference type="PANTHER" id="PTHR22883:SF424">
    <property type="entry name" value="PROTEIN S-ACYLTRANSFERASE 8"/>
    <property type="match status" value="1"/>
</dbReference>
<dbReference type="PANTHER" id="PTHR22883">
    <property type="entry name" value="ZINC FINGER DHHC DOMAIN CONTAINING PROTEIN"/>
    <property type="match status" value="1"/>
</dbReference>
<dbReference type="Pfam" id="PF01529">
    <property type="entry name" value="DHHC"/>
    <property type="match status" value="1"/>
</dbReference>
<dbReference type="PROSITE" id="PS50216">
    <property type="entry name" value="DHHC"/>
    <property type="match status" value="1"/>
</dbReference>
<feature type="chain" id="PRO_0000312030" description="Protein S-acyltransferase 8">
    <location>
        <begin position="1"/>
        <end position="407"/>
    </location>
</feature>
<feature type="transmembrane region" description="Helical" evidence="3">
    <location>
        <begin position="29"/>
        <end position="49"/>
    </location>
</feature>
<feature type="transmembrane region" description="Helical" evidence="3">
    <location>
        <begin position="62"/>
        <end position="82"/>
    </location>
</feature>
<feature type="transmembrane region" description="Helical" evidence="3">
    <location>
        <begin position="181"/>
        <end position="201"/>
    </location>
</feature>
<feature type="transmembrane region" description="Helical" evidence="3">
    <location>
        <begin position="224"/>
        <end position="244"/>
    </location>
</feature>
<feature type="domain" description="DHHC" evidence="4">
    <location>
        <begin position="136"/>
        <end position="186"/>
    </location>
</feature>
<feature type="region of interest" description="Disordered" evidence="5">
    <location>
        <begin position="348"/>
        <end position="368"/>
    </location>
</feature>
<feature type="compositionally biased region" description="Basic and acidic residues" evidence="5">
    <location>
        <begin position="358"/>
        <end position="368"/>
    </location>
</feature>
<feature type="active site" description="S-palmitoyl cysteine intermediate" evidence="1">
    <location>
        <position position="166"/>
    </location>
</feature>
<feature type="modified residue" description="Phosphoserine" evidence="2">
    <location>
        <position position="385"/>
    </location>
</feature>
<protein>
    <recommendedName>
        <fullName>Protein S-acyltransferase 8</fullName>
        <ecNumber>2.3.1.225</ecNumber>
    </recommendedName>
    <alternativeName>
        <fullName>Probable palmitoyltransferase At4g24630</fullName>
    </alternativeName>
    <alternativeName>
        <fullName>Zinc finger DHHC domain-containing protein At4g24630</fullName>
    </alternativeName>
</protein>
<comment type="function">
    <text evidence="6 7">S-acyltransferase involved in protein lipid modification.</text>
</comment>
<comment type="catalytic activity">
    <reaction>
        <text>L-cysteinyl-[protein] + hexadecanoyl-CoA = S-hexadecanoyl-L-cysteinyl-[protein] + CoA</text>
        <dbReference type="Rhea" id="RHEA:36683"/>
        <dbReference type="Rhea" id="RHEA-COMP:10131"/>
        <dbReference type="Rhea" id="RHEA-COMP:11032"/>
        <dbReference type="ChEBI" id="CHEBI:29950"/>
        <dbReference type="ChEBI" id="CHEBI:57287"/>
        <dbReference type="ChEBI" id="CHEBI:57379"/>
        <dbReference type="ChEBI" id="CHEBI:74151"/>
        <dbReference type="EC" id="2.3.1.225"/>
    </reaction>
</comment>
<comment type="subcellular location">
    <subcellularLocation>
        <location evidence="8">Cell membrane</location>
        <topology evidence="8">Multi-pass membrane protein</topology>
    </subcellularLocation>
</comment>
<comment type="tissue specificity">
    <text evidence="6">Expressed in flowers and pollen.</text>
</comment>
<comment type="domain">
    <text evidence="1">The DHHC domain is required for palmitoyltransferase activity.</text>
</comment>
<comment type="similarity">
    <text evidence="8">Belongs to the DHHC palmitoyltransferase family.</text>
</comment>
<comment type="sequence caution" evidence="8">
    <conflict type="erroneous gene model prediction">
        <sequence resource="EMBL-CDS" id="CAA23000"/>
    </conflict>
</comment>
<comment type="sequence caution" evidence="8">
    <conflict type="erroneous gene model prediction">
        <sequence resource="EMBL-CDS" id="CAB79373"/>
    </conflict>
</comment>
<name>ZDH19_ARATH</name>
<organism>
    <name type="scientific">Arabidopsis thaliana</name>
    <name type="common">Mouse-ear cress</name>
    <dbReference type="NCBI Taxonomy" id="3702"/>
    <lineage>
        <taxon>Eukaryota</taxon>
        <taxon>Viridiplantae</taxon>
        <taxon>Streptophyta</taxon>
        <taxon>Embryophyta</taxon>
        <taxon>Tracheophyta</taxon>
        <taxon>Spermatophyta</taxon>
        <taxon>Magnoliopsida</taxon>
        <taxon>eudicotyledons</taxon>
        <taxon>Gunneridae</taxon>
        <taxon>Pentapetalae</taxon>
        <taxon>rosids</taxon>
        <taxon>malvids</taxon>
        <taxon>Brassicales</taxon>
        <taxon>Brassicaceae</taxon>
        <taxon>Camelineae</taxon>
        <taxon>Arabidopsis</taxon>
    </lineage>
</organism>
<evidence type="ECO:0000250" key="1"/>
<evidence type="ECO:0000250" key="2">
    <source>
        <dbReference type="UniProtKB" id="Q9M306"/>
    </source>
</evidence>
<evidence type="ECO:0000255" key="3"/>
<evidence type="ECO:0000255" key="4">
    <source>
        <dbReference type="PROSITE-ProRule" id="PRU00067"/>
    </source>
</evidence>
<evidence type="ECO:0000256" key="5">
    <source>
        <dbReference type="SAM" id="MobiDB-lite"/>
    </source>
</evidence>
<evidence type="ECO:0000269" key="6">
    <source>
    </source>
</evidence>
<evidence type="ECO:0000269" key="7">
    <source ref="6"/>
</evidence>
<evidence type="ECO:0000305" key="8"/>
<keyword id="KW-0012">Acyltransferase</keyword>
<keyword id="KW-1003">Cell membrane</keyword>
<keyword id="KW-0449">Lipoprotein</keyword>
<keyword id="KW-0472">Membrane</keyword>
<keyword id="KW-0564">Palmitate</keyword>
<keyword id="KW-0597">Phosphoprotein</keyword>
<keyword id="KW-1185">Reference proteome</keyword>
<keyword id="KW-0808">Transferase</keyword>
<keyword id="KW-0812">Transmembrane</keyword>
<keyword id="KW-1133">Transmembrane helix</keyword>